<reference key="1">
    <citation type="journal article" date="1988" name="J. Biol. Chem.">
        <title>The structure, expression, and properties of additional members of the protein kinase C family.</title>
        <authorList>
            <person name="Ono Y."/>
            <person name="Fujii T."/>
            <person name="Ogita K."/>
            <person name="Kikkawa U."/>
            <person name="Igarashi K."/>
            <person name="Nishizuka Y."/>
        </authorList>
    </citation>
    <scope>NUCLEOTIDE SEQUENCE [MRNA]</scope>
    <source>
        <tissue>Brain</tissue>
    </source>
</reference>
<reference key="2">
    <citation type="journal article" date="1987" name="FEBS Lett.">
        <title>Identification of three additional members of rat protein kinase C family: delta-, epsilon- and zeta-subspecies.</title>
        <authorList>
            <person name="Ono Y."/>
            <person name="Fujii T."/>
            <person name="Ogita K."/>
            <person name="Kikkawa U."/>
            <person name="Igarashi K."/>
            <person name="Nishizuka Y."/>
        </authorList>
    </citation>
    <scope>NUCLEOTIDE SEQUENCE [MRNA] OF 135-297</scope>
</reference>
<reference key="3">
    <citation type="journal article" date="1997" name="J. Biol. Chem.">
        <title>The coatomer protein beta'-COP, a selective binding protein (RACK) for protein kinase Cepsilon.</title>
        <authorList>
            <person name="Csukai M."/>
            <person name="Chen C.-H."/>
            <person name="de Matteis M.A."/>
            <person name="Mochly-Rosen D."/>
        </authorList>
    </citation>
    <scope>INTERACTION WITH COPB1</scope>
    <scope>SUBCELLULAR LOCATION</scope>
</reference>
<reference key="4">
    <citation type="journal article" date="2001" name="J. Biol. Chem.">
        <title>Inhibition of insulin-induced activation of Akt by a kinase-deficient mutant of the epsilon isozyme of protein kinase C.</title>
        <authorList>
            <person name="Matsumoto M."/>
            <person name="Ogawa W."/>
            <person name="Hino Y."/>
            <person name="Furukawa K."/>
            <person name="Ono Y."/>
            <person name="Takahashi M."/>
            <person name="Ohba M."/>
            <person name="Kuroki T."/>
            <person name="Kasuga M."/>
        </authorList>
    </citation>
    <scope>FUNCTION IN PHOSPHORYLATION OF AKT1</scope>
</reference>
<reference key="5">
    <citation type="journal article" date="2004" name="J. Cell Biol.">
        <title>Muscle ring finger protein-1 inhibits PKC-epsilon activation and prevents cardiomyocyte hypertrophy.</title>
        <authorList>
            <person name="Arya R."/>
            <person name="Kedar V."/>
            <person name="Hwang J.R."/>
            <person name="McDonough H."/>
            <person name="Li H.-H."/>
            <person name="Taylor J."/>
            <person name="Patterson C."/>
        </authorList>
    </citation>
    <scope>INTERACTION WITH RACK1 AND TRIM63</scope>
</reference>
<reference key="6">
    <citation type="journal article" date="2003" name="Nat. Neurosci.">
        <title>A PKC epsilon-ENH-channel complex specifically modulates N-type Ca2+ channels.</title>
        <authorList>
            <person name="Maeno-Hikichi Y."/>
            <person name="Chang S."/>
            <person name="Matsumura K."/>
            <person name="Lai M."/>
            <person name="Lin H."/>
            <person name="Nakagawa N."/>
            <person name="Kuroda S."/>
            <person name="Zhang J.F."/>
        </authorList>
    </citation>
    <scope>FUNCTION</scope>
    <scope>IDENTIFICATION IN A COMPLEX WITH PDLIM5 AND N-TYPE CALCIUM CHANNEL</scope>
</reference>
<reference key="7">
    <citation type="journal article" date="2007" name="J. Mol. Cell. Cardiol.">
        <title>Protein kinase Cepsilon-dependent MARCKS phosphorylation in neonatal and adult rat ventricular myocytes.</title>
        <authorList>
            <person name="Heidkamp M.C."/>
            <person name="Iyengar R."/>
            <person name="Szotek E.L."/>
            <person name="Cribbs L.L."/>
            <person name="Samarel A.M."/>
        </authorList>
    </citation>
    <scope>FUNCTION IN PHOSPHORYLATION OF MARCKS</scope>
</reference>
<reference key="8">
    <citation type="journal article" date="2012" name="Nat. Commun.">
        <title>Quantitative maps of protein phosphorylation sites across 14 different rat organs and tissues.</title>
        <authorList>
            <person name="Lundby A."/>
            <person name="Secher A."/>
            <person name="Lage K."/>
            <person name="Nordsborg N.B."/>
            <person name="Dmytriyev A."/>
            <person name="Lundby C."/>
            <person name="Olsen J.V."/>
        </authorList>
    </citation>
    <scope>PHOSPHORYLATION [LARGE SCALE ANALYSIS] AT SER-329; SER-337; SER-346; SER-368; SER-388; THR-710 AND SER-729</scope>
    <scope>IDENTIFICATION BY MASS SPECTROMETRY [LARGE SCALE ANALYSIS]</scope>
</reference>
<reference key="9">
    <citation type="journal article" date="2001" name="J. Mol. Biol.">
        <title>Structure of the C2 domain from novel protein kinase Cepsilon. A membrane binding model for Ca(2+)-independent C2 domains.</title>
        <authorList>
            <person name="Ochoa W.F."/>
            <person name="Garcia-Garcia J."/>
            <person name="Fita I."/>
            <person name="Corbalan-Garcia S."/>
            <person name="Verdaguer N."/>
            <person name="Gomez-Fernandez J.C."/>
        </authorList>
    </citation>
    <scope>X-RAY CRYSTALLOGRAPHY (1.70 ANGSTROMS) OF 1-136</scope>
</reference>
<feature type="chain" id="PRO_0000055700" description="Protein kinase C epsilon type">
    <location>
        <begin position="1"/>
        <end position="737"/>
    </location>
</feature>
<feature type="domain" description="C2" evidence="4">
    <location>
        <begin position="1"/>
        <end position="117"/>
    </location>
</feature>
<feature type="domain" description="Protein kinase" evidence="5">
    <location>
        <begin position="408"/>
        <end position="668"/>
    </location>
</feature>
<feature type="domain" description="AGC-kinase C-terminal" evidence="7">
    <location>
        <begin position="669"/>
        <end position="737"/>
    </location>
</feature>
<feature type="zinc finger region" description="Phorbol-ester/DAG-type 1" evidence="6">
    <location>
        <begin position="169"/>
        <end position="220"/>
    </location>
</feature>
<feature type="zinc finger region" description="Phorbol-ester/DAG-type 2" evidence="6">
    <location>
        <begin position="242"/>
        <end position="292"/>
    </location>
</feature>
<feature type="region of interest" description="Disordered" evidence="9">
    <location>
        <begin position="310"/>
        <end position="356"/>
    </location>
</feature>
<feature type="region of interest" description="Disordered" evidence="9">
    <location>
        <begin position="369"/>
        <end position="398"/>
    </location>
</feature>
<feature type="short sequence motif" description="Interaction with actin" evidence="1">
    <location>
        <begin position="223"/>
        <end position="228"/>
    </location>
</feature>
<feature type="active site" description="Proton acceptor" evidence="5 8">
    <location>
        <position position="532"/>
    </location>
</feature>
<feature type="binding site" evidence="5">
    <location>
        <begin position="414"/>
        <end position="422"/>
    </location>
    <ligand>
        <name>ATP</name>
        <dbReference type="ChEBI" id="CHEBI:30616"/>
    </ligand>
</feature>
<feature type="binding site" evidence="5">
    <location>
        <position position="437"/>
    </location>
    <ligand>
        <name>ATP</name>
        <dbReference type="ChEBI" id="CHEBI:30616"/>
    </ligand>
</feature>
<feature type="modified residue" description="Phosphoserine" evidence="2">
    <location>
        <position position="62"/>
    </location>
</feature>
<feature type="modified residue" description="Phosphothreonine" evidence="3">
    <location>
        <position position="228"/>
    </location>
</feature>
<feature type="modified residue" description="Phosphoserine" evidence="2">
    <location>
        <position position="234"/>
    </location>
</feature>
<feature type="modified residue" description="Phosphothreonine" evidence="3">
    <location>
        <position position="309"/>
    </location>
</feature>
<feature type="modified residue" description="Phosphoserine" evidence="3">
    <location>
        <position position="316"/>
    </location>
</feature>
<feature type="modified residue" description="Phosphoserine" evidence="16">
    <location>
        <position position="329"/>
    </location>
</feature>
<feature type="modified residue" description="Phosphoserine" evidence="16">
    <location>
        <position position="337"/>
    </location>
</feature>
<feature type="modified residue" description="Phosphoserine" evidence="16">
    <location>
        <position position="346"/>
    </location>
</feature>
<feature type="modified residue" description="Phosphothreonine" evidence="2">
    <location>
        <position position="349"/>
    </location>
</feature>
<feature type="modified residue" description="Phosphoserine; by MAPK11 and MAPK14" evidence="2">
    <location>
        <position position="350"/>
    </location>
</feature>
<feature type="modified residue" description="Phosphoserine" evidence="16">
    <location>
        <position position="368"/>
    </location>
</feature>
<feature type="modified residue" description="Phosphoserine" evidence="16">
    <location>
        <position position="388"/>
    </location>
</feature>
<feature type="modified residue" description="Phosphothreonine; by PDPK1" evidence="3">
    <location>
        <position position="566"/>
    </location>
</feature>
<feature type="modified residue" description="Phosphothreonine" evidence="2">
    <location>
        <position position="703"/>
    </location>
</feature>
<feature type="modified residue" description="Phosphothreonine" evidence="16">
    <location>
        <position position="710"/>
    </location>
</feature>
<feature type="modified residue" description="Phosphoserine" evidence="16">
    <location>
        <position position="729"/>
    </location>
</feature>
<feature type="strand" evidence="17">
    <location>
        <begin position="4"/>
        <end position="17"/>
    </location>
</feature>
<feature type="helix" evidence="17">
    <location>
        <begin position="22"/>
        <end position="25"/>
    </location>
</feature>
<feature type="strand" evidence="17">
    <location>
        <begin position="40"/>
        <end position="46"/>
    </location>
</feature>
<feature type="strand" evidence="17">
    <location>
        <begin position="49"/>
        <end position="53"/>
    </location>
</feature>
<feature type="strand" evidence="17">
    <location>
        <begin position="64"/>
        <end position="76"/>
    </location>
</feature>
<feature type="strand" evidence="17">
    <location>
        <begin position="78"/>
        <end position="85"/>
    </location>
</feature>
<feature type="strand" evidence="17">
    <location>
        <begin position="88"/>
        <end position="91"/>
    </location>
</feature>
<feature type="strand" evidence="17">
    <location>
        <begin position="93"/>
        <end position="101"/>
    </location>
</feature>
<feature type="helix" evidence="17">
    <location>
        <begin position="102"/>
        <end position="105"/>
    </location>
</feature>
<feature type="strand" evidence="17">
    <location>
        <begin position="111"/>
        <end position="118"/>
    </location>
</feature>
<feature type="strand" evidence="17">
    <location>
        <begin position="120"/>
        <end position="122"/>
    </location>
</feature>
<feature type="strand" evidence="17">
    <location>
        <begin position="124"/>
        <end position="135"/>
    </location>
</feature>
<protein>
    <recommendedName>
        <fullName>Protein kinase C epsilon type</fullName>
        <ecNumber evidence="3">2.7.11.13</ecNumber>
    </recommendedName>
    <alternativeName>
        <fullName>nPKC-epsilon</fullName>
    </alternativeName>
</protein>
<accession>P09216</accession>
<dbReference type="EC" id="2.7.11.13" evidence="3"/>
<dbReference type="EMBL" id="M18331">
    <property type="protein sequence ID" value="AAA41872.1"/>
    <property type="molecule type" value="mRNA"/>
</dbReference>
<dbReference type="PIR" id="B28163">
    <property type="entry name" value="KIRTCE"/>
</dbReference>
<dbReference type="RefSeq" id="NP_058867.1">
    <property type="nucleotide sequence ID" value="NM_017171.1"/>
</dbReference>
<dbReference type="PDB" id="1GMI">
    <property type="method" value="X-ray"/>
    <property type="resolution" value="1.70 A"/>
    <property type="chains" value="A=1-136"/>
</dbReference>
<dbReference type="PDBsum" id="1GMI"/>
<dbReference type="SMR" id="P09216"/>
<dbReference type="BioGRID" id="247999">
    <property type="interactions" value="7"/>
</dbReference>
<dbReference type="CORUM" id="P09216"/>
<dbReference type="FunCoup" id="P09216">
    <property type="interactions" value="1663"/>
</dbReference>
<dbReference type="IntAct" id="P09216">
    <property type="interactions" value="5"/>
</dbReference>
<dbReference type="STRING" id="10116.ENSRNOP00000020959"/>
<dbReference type="BindingDB" id="P09216"/>
<dbReference type="ChEMBL" id="CHEMBL3424"/>
<dbReference type="DrugCentral" id="P09216"/>
<dbReference type="GlyGen" id="P09216">
    <property type="glycosylation" value="6 sites, 1 O-linked glycan (6 sites)"/>
</dbReference>
<dbReference type="iPTMnet" id="P09216"/>
<dbReference type="PhosphoSitePlus" id="P09216"/>
<dbReference type="SwissPalm" id="P09216"/>
<dbReference type="PaxDb" id="10116-ENSRNOP00000020959"/>
<dbReference type="GeneID" id="29340"/>
<dbReference type="KEGG" id="rno:29340"/>
<dbReference type="UCSC" id="RGD:61925">
    <property type="organism name" value="rat"/>
</dbReference>
<dbReference type="AGR" id="RGD:61925"/>
<dbReference type="CTD" id="5581"/>
<dbReference type="RGD" id="61925">
    <property type="gene designation" value="Prkce"/>
</dbReference>
<dbReference type="eggNOG" id="KOG0694">
    <property type="taxonomic scope" value="Eukaryota"/>
</dbReference>
<dbReference type="InParanoid" id="P09216"/>
<dbReference type="OrthoDB" id="63267at2759"/>
<dbReference type="PhylomeDB" id="P09216"/>
<dbReference type="BRENDA" id="2.7.11.13">
    <property type="organism ID" value="5301"/>
</dbReference>
<dbReference type="Reactome" id="R-RNO-114508">
    <property type="pathway name" value="Effects of PIP2 hydrolysis"/>
</dbReference>
<dbReference type="Reactome" id="R-RNO-1250196">
    <property type="pathway name" value="SHC1 events in ERBB2 signaling"/>
</dbReference>
<dbReference type="Reactome" id="R-RNO-1489509">
    <property type="pathway name" value="DAG and IP3 signaling"/>
</dbReference>
<dbReference type="Reactome" id="R-RNO-2029485">
    <property type="pathway name" value="Role of phospholipids in phagocytosis"/>
</dbReference>
<dbReference type="EvolutionaryTrace" id="P09216"/>
<dbReference type="PRO" id="PR:P09216"/>
<dbReference type="Proteomes" id="UP000002494">
    <property type="component" value="Unplaced"/>
</dbReference>
<dbReference type="GO" id="GO:0071944">
    <property type="term" value="C:cell periphery"/>
    <property type="evidence" value="ECO:0000250"/>
    <property type="project" value="UniProtKB"/>
</dbReference>
<dbReference type="GO" id="GO:0005737">
    <property type="term" value="C:cytoplasm"/>
    <property type="evidence" value="ECO:0000266"/>
    <property type="project" value="RGD"/>
</dbReference>
<dbReference type="GO" id="GO:0005856">
    <property type="term" value="C:cytoskeleton"/>
    <property type="evidence" value="ECO:0007669"/>
    <property type="project" value="UniProtKB-SubCell"/>
</dbReference>
<dbReference type="GO" id="GO:0005829">
    <property type="term" value="C:cytosol"/>
    <property type="evidence" value="ECO:0000266"/>
    <property type="project" value="RGD"/>
</dbReference>
<dbReference type="GO" id="GO:0005783">
    <property type="term" value="C:endoplasmic reticulum"/>
    <property type="evidence" value="ECO:0000266"/>
    <property type="project" value="RGD"/>
</dbReference>
<dbReference type="GO" id="GO:0098978">
    <property type="term" value="C:glutamatergic synapse"/>
    <property type="evidence" value="ECO:0000314"/>
    <property type="project" value="SynGO"/>
</dbReference>
<dbReference type="GO" id="GO:0005794">
    <property type="term" value="C:Golgi apparatus"/>
    <property type="evidence" value="ECO:0000266"/>
    <property type="project" value="RGD"/>
</dbReference>
<dbReference type="GO" id="GO:0000139">
    <property type="term" value="C:Golgi membrane"/>
    <property type="evidence" value="ECO:0000314"/>
    <property type="project" value="RGD"/>
</dbReference>
<dbReference type="GO" id="GO:0016020">
    <property type="term" value="C:membrane"/>
    <property type="evidence" value="ECO:0000266"/>
    <property type="project" value="RGD"/>
</dbReference>
<dbReference type="GO" id="GO:0005739">
    <property type="term" value="C:mitochondrion"/>
    <property type="evidence" value="ECO:0000266"/>
    <property type="project" value="RGD"/>
</dbReference>
<dbReference type="GO" id="GO:0031594">
    <property type="term" value="C:neuromuscular junction"/>
    <property type="evidence" value="ECO:0000314"/>
    <property type="project" value="SynGO"/>
</dbReference>
<dbReference type="GO" id="GO:0005634">
    <property type="term" value="C:nucleus"/>
    <property type="evidence" value="ECO:0000266"/>
    <property type="project" value="RGD"/>
</dbReference>
<dbReference type="GO" id="GO:0048471">
    <property type="term" value="C:perinuclear region of cytoplasm"/>
    <property type="evidence" value="ECO:0000250"/>
    <property type="project" value="UniProtKB"/>
</dbReference>
<dbReference type="GO" id="GO:0005886">
    <property type="term" value="C:plasma membrane"/>
    <property type="evidence" value="ECO:0000266"/>
    <property type="project" value="RGD"/>
</dbReference>
<dbReference type="GO" id="GO:0099523">
    <property type="term" value="C:presynaptic cytosol"/>
    <property type="evidence" value="ECO:0000314"/>
    <property type="project" value="SynGO"/>
</dbReference>
<dbReference type="GO" id="GO:0030315">
    <property type="term" value="C:T-tubule"/>
    <property type="evidence" value="ECO:0000314"/>
    <property type="project" value="RGD"/>
</dbReference>
<dbReference type="GO" id="GO:0071889">
    <property type="term" value="F:14-3-3 protein binding"/>
    <property type="evidence" value="ECO:0000266"/>
    <property type="project" value="RGD"/>
</dbReference>
<dbReference type="GO" id="GO:0003785">
    <property type="term" value="F:actin monomer binding"/>
    <property type="evidence" value="ECO:0000250"/>
    <property type="project" value="UniProtKB"/>
</dbReference>
<dbReference type="GO" id="GO:0005524">
    <property type="term" value="F:ATP binding"/>
    <property type="evidence" value="ECO:0007669"/>
    <property type="project" value="UniProtKB-KW"/>
</dbReference>
<dbReference type="GO" id="GO:0004699">
    <property type="term" value="F:diacylglycerol-dependent, calcium-independent serine/threonine kinase activity"/>
    <property type="evidence" value="ECO:0000315"/>
    <property type="project" value="UniProtKB"/>
</dbReference>
<dbReference type="GO" id="GO:0008047">
    <property type="term" value="F:enzyme activator activity"/>
    <property type="evidence" value="ECO:0000266"/>
    <property type="project" value="RGD"/>
</dbReference>
<dbReference type="GO" id="GO:0019899">
    <property type="term" value="F:enzyme binding"/>
    <property type="evidence" value="ECO:0000266"/>
    <property type="project" value="RGD"/>
</dbReference>
<dbReference type="GO" id="GO:0035276">
    <property type="term" value="F:ethanol binding"/>
    <property type="evidence" value="ECO:0000266"/>
    <property type="project" value="RGD"/>
</dbReference>
<dbReference type="GO" id="GO:0004672">
    <property type="term" value="F:protein kinase activity"/>
    <property type="evidence" value="ECO:0000250"/>
    <property type="project" value="UniProtKB"/>
</dbReference>
<dbReference type="GO" id="GO:0019901">
    <property type="term" value="F:protein kinase binding"/>
    <property type="evidence" value="ECO:0000353"/>
    <property type="project" value="RGD"/>
</dbReference>
<dbReference type="GO" id="GO:0106310">
    <property type="term" value="F:protein serine kinase activity"/>
    <property type="evidence" value="ECO:0007669"/>
    <property type="project" value="RHEA"/>
</dbReference>
<dbReference type="GO" id="GO:0004674">
    <property type="term" value="F:protein serine/threonine kinase activity"/>
    <property type="evidence" value="ECO:0000266"/>
    <property type="project" value="RGD"/>
</dbReference>
<dbReference type="GO" id="GO:0120283">
    <property type="term" value="F:protein serine/threonine kinase binding"/>
    <property type="evidence" value="ECO:0000353"/>
    <property type="project" value="RGD"/>
</dbReference>
<dbReference type="GO" id="GO:0017124">
    <property type="term" value="F:SH3 domain binding"/>
    <property type="evidence" value="ECO:0000353"/>
    <property type="project" value="RGD"/>
</dbReference>
<dbReference type="GO" id="GO:0030546">
    <property type="term" value="F:signaling receptor activator activity"/>
    <property type="evidence" value="ECO:0000266"/>
    <property type="project" value="RGD"/>
</dbReference>
<dbReference type="GO" id="GO:0005102">
    <property type="term" value="F:signaling receptor binding"/>
    <property type="evidence" value="ECO:0000353"/>
    <property type="project" value="RGD"/>
</dbReference>
<dbReference type="GO" id="GO:0008270">
    <property type="term" value="F:zinc ion binding"/>
    <property type="evidence" value="ECO:0007669"/>
    <property type="project" value="UniProtKB-KW"/>
</dbReference>
<dbReference type="GO" id="GO:0051301">
    <property type="term" value="P:cell division"/>
    <property type="evidence" value="ECO:0007669"/>
    <property type="project" value="UniProtKB-KW"/>
</dbReference>
<dbReference type="GO" id="GO:0031589">
    <property type="term" value="P:cell-substrate adhesion"/>
    <property type="evidence" value="ECO:0000266"/>
    <property type="project" value="RGD"/>
</dbReference>
<dbReference type="GO" id="GO:0071361">
    <property type="term" value="P:cellular response to ethanol"/>
    <property type="evidence" value="ECO:0000266"/>
    <property type="project" value="RGD"/>
</dbReference>
<dbReference type="GO" id="GO:0071456">
    <property type="term" value="P:cellular response to hypoxia"/>
    <property type="evidence" value="ECO:0000266"/>
    <property type="project" value="RGD"/>
</dbReference>
<dbReference type="GO" id="GO:0036120">
    <property type="term" value="P:cellular response to platelet-derived growth factor stimulus"/>
    <property type="evidence" value="ECO:0000315"/>
    <property type="project" value="UniProtKB"/>
</dbReference>
<dbReference type="GO" id="GO:0071380">
    <property type="term" value="P:cellular response to prostaglandin E stimulus"/>
    <property type="evidence" value="ECO:0000266"/>
    <property type="project" value="RGD"/>
</dbReference>
<dbReference type="GO" id="GO:0051649">
    <property type="term" value="P:establishment of localization in cell"/>
    <property type="evidence" value="ECO:0000266"/>
    <property type="project" value="RGD"/>
</dbReference>
<dbReference type="GO" id="GO:0030073">
    <property type="term" value="P:insulin secretion"/>
    <property type="evidence" value="ECO:0000266"/>
    <property type="project" value="RGD"/>
</dbReference>
<dbReference type="GO" id="GO:0035556">
    <property type="term" value="P:intracellular signal transduction"/>
    <property type="evidence" value="ECO:0000314"/>
    <property type="project" value="RGD"/>
</dbReference>
<dbReference type="GO" id="GO:0031663">
    <property type="term" value="P:lipopolysaccharide-mediated signaling pathway"/>
    <property type="evidence" value="ECO:0000250"/>
    <property type="project" value="UniProtKB"/>
</dbReference>
<dbReference type="GO" id="GO:0035641">
    <property type="term" value="P:locomotory exploration behavior"/>
    <property type="evidence" value="ECO:0000266"/>
    <property type="project" value="RGD"/>
</dbReference>
<dbReference type="GO" id="GO:0002281">
    <property type="term" value="P:macrophage activation involved in immune response"/>
    <property type="evidence" value="ECO:0000266"/>
    <property type="project" value="RGD"/>
</dbReference>
<dbReference type="GO" id="GO:0000165">
    <property type="term" value="P:MAPK cascade"/>
    <property type="evidence" value="ECO:0000266"/>
    <property type="project" value="RGD"/>
</dbReference>
<dbReference type="GO" id="GO:0070254">
    <property type="term" value="P:mucus secretion"/>
    <property type="evidence" value="ECO:0000266"/>
    <property type="project" value="RGD"/>
</dbReference>
<dbReference type="GO" id="GO:0043066">
    <property type="term" value="P:negative regulation of apoptotic process"/>
    <property type="evidence" value="ECO:0000315"/>
    <property type="project" value="UniProtKB"/>
</dbReference>
<dbReference type="GO" id="GO:0051562">
    <property type="term" value="P:negative regulation of mitochondrial calcium ion concentration"/>
    <property type="evidence" value="ECO:0000315"/>
    <property type="project" value="UniProtKB"/>
</dbReference>
<dbReference type="GO" id="GO:0010917">
    <property type="term" value="P:negative regulation of mitochondrial membrane potential"/>
    <property type="evidence" value="ECO:0000315"/>
    <property type="project" value="UniProtKB"/>
</dbReference>
<dbReference type="GO" id="GO:0031397">
    <property type="term" value="P:negative regulation of protein ubiquitination"/>
    <property type="evidence" value="ECO:0000266"/>
    <property type="project" value="RGD"/>
</dbReference>
<dbReference type="GO" id="GO:0051280">
    <property type="term" value="P:negative regulation of release of sequestered calcium ion into cytosol"/>
    <property type="evidence" value="ECO:0000315"/>
    <property type="project" value="UniProtKB"/>
</dbReference>
<dbReference type="GO" id="GO:0030838">
    <property type="term" value="P:positive regulation of actin filament polymerization"/>
    <property type="evidence" value="ECO:0000250"/>
    <property type="project" value="UniProtKB"/>
</dbReference>
<dbReference type="GO" id="GO:0043123">
    <property type="term" value="P:positive regulation of canonical NF-kappaB signal transduction"/>
    <property type="evidence" value="ECO:0000266"/>
    <property type="project" value="RGD"/>
</dbReference>
<dbReference type="GO" id="GO:0010811">
    <property type="term" value="P:positive regulation of cell-substrate adhesion"/>
    <property type="evidence" value="ECO:0000266"/>
    <property type="project" value="RGD"/>
</dbReference>
<dbReference type="GO" id="GO:0032467">
    <property type="term" value="P:positive regulation of cytokinesis"/>
    <property type="evidence" value="ECO:0000250"/>
    <property type="project" value="UniProtKB"/>
</dbReference>
<dbReference type="GO" id="GO:0010634">
    <property type="term" value="P:positive regulation of epithelial cell migration"/>
    <property type="evidence" value="ECO:0000250"/>
    <property type="project" value="UniProtKB"/>
</dbReference>
<dbReference type="GO" id="GO:0010763">
    <property type="term" value="P:positive regulation of fibroblast migration"/>
    <property type="evidence" value="ECO:0000250"/>
    <property type="project" value="UniProtKB"/>
</dbReference>
<dbReference type="GO" id="GO:0032024">
    <property type="term" value="P:positive regulation of insulin secretion"/>
    <property type="evidence" value="ECO:0000266"/>
    <property type="project" value="RGD"/>
</dbReference>
<dbReference type="GO" id="GO:0050996">
    <property type="term" value="P:positive regulation of lipid catabolic process"/>
    <property type="evidence" value="ECO:0000266"/>
    <property type="project" value="RGD"/>
</dbReference>
<dbReference type="GO" id="GO:0043410">
    <property type="term" value="P:positive regulation of MAPK cascade"/>
    <property type="evidence" value="ECO:0000266"/>
    <property type="project" value="RGD"/>
</dbReference>
<dbReference type="GO" id="GO:0070257">
    <property type="term" value="P:positive regulation of mucus secretion"/>
    <property type="evidence" value="ECO:0000266"/>
    <property type="project" value="RGD"/>
</dbReference>
<dbReference type="GO" id="GO:0032230">
    <property type="term" value="P:positive regulation of synaptic transmission, GABAergic"/>
    <property type="evidence" value="ECO:0000266"/>
    <property type="project" value="RGD"/>
</dbReference>
<dbReference type="GO" id="GO:0090303">
    <property type="term" value="P:positive regulation of wound healing"/>
    <property type="evidence" value="ECO:0000250"/>
    <property type="project" value="UniProtKB"/>
</dbReference>
<dbReference type="GO" id="GO:0099171">
    <property type="term" value="P:presynaptic modulation of chemical synaptic transmission"/>
    <property type="evidence" value="ECO:0000314"/>
    <property type="project" value="SynGO"/>
</dbReference>
<dbReference type="GO" id="GO:0061178">
    <property type="term" value="P:regulation of insulin secretion involved in cellular response to glucose stimulus"/>
    <property type="evidence" value="ECO:0000266"/>
    <property type="project" value="RGD"/>
</dbReference>
<dbReference type="GO" id="GO:0019216">
    <property type="term" value="P:regulation of lipid metabolic process"/>
    <property type="evidence" value="ECO:0000266"/>
    <property type="project" value="RGD"/>
</dbReference>
<dbReference type="GO" id="GO:0051279">
    <property type="term" value="P:regulation of release of sequestered calcium ion into cytosol"/>
    <property type="evidence" value="ECO:0000266"/>
    <property type="project" value="RGD"/>
</dbReference>
<dbReference type="GO" id="GO:0043278">
    <property type="term" value="P:response to morphine"/>
    <property type="evidence" value="ECO:0000266"/>
    <property type="project" value="RGD"/>
</dbReference>
<dbReference type="GO" id="GO:0051932">
    <property type="term" value="P:synaptic transmission, GABAergic"/>
    <property type="evidence" value="ECO:0000266"/>
    <property type="project" value="RGD"/>
</dbReference>
<dbReference type="GO" id="GO:0009407">
    <property type="term" value="P:toxin catabolic process"/>
    <property type="evidence" value="ECO:0000266"/>
    <property type="project" value="RGD"/>
</dbReference>
<dbReference type="GO" id="GO:0035669">
    <property type="term" value="P:TRAM-dependent toll-like receptor 4 signaling pathway"/>
    <property type="evidence" value="ECO:0000250"/>
    <property type="project" value="UniProtKB"/>
</dbReference>
<dbReference type="GO" id="GO:0042178">
    <property type="term" value="P:xenobiotic catabolic process"/>
    <property type="evidence" value="ECO:0000266"/>
    <property type="project" value="RGD"/>
</dbReference>
<dbReference type="CDD" id="cd20835">
    <property type="entry name" value="C1_nPKC_epsilon-like_rpt1"/>
    <property type="match status" value="1"/>
</dbReference>
<dbReference type="CDD" id="cd20838">
    <property type="entry name" value="C1_nPKC_epsilon-like_rpt2"/>
    <property type="match status" value="1"/>
</dbReference>
<dbReference type="CDD" id="cd04014">
    <property type="entry name" value="C2_PKC_epsilon"/>
    <property type="match status" value="1"/>
</dbReference>
<dbReference type="CDD" id="cd05591">
    <property type="entry name" value="STKc_nPKC_epsilon"/>
    <property type="match status" value="1"/>
</dbReference>
<dbReference type="FunFam" id="3.30.60.20:FF:000003">
    <property type="entry name" value="Protein kinase C delta"/>
    <property type="match status" value="1"/>
</dbReference>
<dbReference type="FunFam" id="1.10.510.10:FF:000126">
    <property type="entry name" value="Protein kinase C epsilon"/>
    <property type="match status" value="1"/>
</dbReference>
<dbReference type="FunFam" id="2.60.40.150:FF:000056">
    <property type="entry name" value="Protein kinase C epsilon"/>
    <property type="match status" value="1"/>
</dbReference>
<dbReference type="FunFam" id="3.30.200.20:FF:000601">
    <property type="entry name" value="Protein kinase C epsilon"/>
    <property type="match status" value="1"/>
</dbReference>
<dbReference type="FunFam" id="3.30.60.20:FF:000024">
    <property type="entry name" value="Protein kinase C epsilon"/>
    <property type="match status" value="1"/>
</dbReference>
<dbReference type="Gene3D" id="3.30.60.20">
    <property type="match status" value="2"/>
</dbReference>
<dbReference type="Gene3D" id="2.60.40.150">
    <property type="entry name" value="C2 domain"/>
    <property type="match status" value="1"/>
</dbReference>
<dbReference type="Gene3D" id="3.30.200.20">
    <property type="entry name" value="Phosphorylase Kinase, domain 1"/>
    <property type="match status" value="1"/>
</dbReference>
<dbReference type="Gene3D" id="1.10.510.10">
    <property type="entry name" value="Transferase(Phosphotransferase) domain 1"/>
    <property type="match status" value="1"/>
</dbReference>
<dbReference type="InterPro" id="IPR000961">
    <property type="entry name" value="AGC-kinase_C"/>
</dbReference>
<dbReference type="InterPro" id="IPR046349">
    <property type="entry name" value="C1-like_sf"/>
</dbReference>
<dbReference type="InterPro" id="IPR000008">
    <property type="entry name" value="C2_dom"/>
</dbReference>
<dbReference type="InterPro" id="IPR035892">
    <property type="entry name" value="C2_domain_sf"/>
</dbReference>
<dbReference type="InterPro" id="IPR020454">
    <property type="entry name" value="DAG/PE-bd"/>
</dbReference>
<dbReference type="InterPro" id="IPR011009">
    <property type="entry name" value="Kinase-like_dom_sf"/>
</dbReference>
<dbReference type="InterPro" id="IPR034669">
    <property type="entry name" value="nPKC_epsilon"/>
</dbReference>
<dbReference type="InterPro" id="IPR002219">
    <property type="entry name" value="PE/DAG-bd"/>
</dbReference>
<dbReference type="InterPro" id="IPR027274">
    <property type="entry name" value="PKC_epsilon"/>
</dbReference>
<dbReference type="InterPro" id="IPR017892">
    <property type="entry name" value="Pkinase_C"/>
</dbReference>
<dbReference type="InterPro" id="IPR014376">
    <property type="entry name" value="Prot_kin_PKC_delta"/>
</dbReference>
<dbReference type="InterPro" id="IPR000719">
    <property type="entry name" value="Prot_kinase_dom"/>
</dbReference>
<dbReference type="InterPro" id="IPR017441">
    <property type="entry name" value="Protein_kinase_ATP_BS"/>
</dbReference>
<dbReference type="InterPro" id="IPR008271">
    <property type="entry name" value="Ser/Thr_kinase_AS"/>
</dbReference>
<dbReference type="PANTHER" id="PTHR24351">
    <property type="entry name" value="RIBOSOMAL PROTEIN S6 KINASE"/>
    <property type="match status" value="1"/>
</dbReference>
<dbReference type="Pfam" id="PF00130">
    <property type="entry name" value="C1_1"/>
    <property type="match status" value="2"/>
</dbReference>
<dbReference type="Pfam" id="PF00168">
    <property type="entry name" value="C2"/>
    <property type="match status" value="1"/>
</dbReference>
<dbReference type="Pfam" id="PF00069">
    <property type="entry name" value="Pkinase"/>
    <property type="match status" value="1"/>
</dbReference>
<dbReference type="Pfam" id="PF00433">
    <property type="entry name" value="Pkinase_C"/>
    <property type="match status" value="1"/>
</dbReference>
<dbReference type="PIRSF" id="PIRSF000551">
    <property type="entry name" value="PKC_delta"/>
    <property type="match status" value="1"/>
</dbReference>
<dbReference type="PIRSF" id="PIRSF501106">
    <property type="entry name" value="Protein_kin_C_epsilon"/>
    <property type="match status" value="1"/>
</dbReference>
<dbReference type="PRINTS" id="PR00008">
    <property type="entry name" value="DAGPEDOMAIN"/>
</dbReference>
<dbReference type="SMART" id="SM00109">
    <property type="entry name" value="C1"/>
    <property type="match status" value="2"/>
</dbReference>
<dbReference type="SMART" id="SM00239">
    <property type="entry name" value="C2"/>
    <property type="match status" value="1"/>
</dbReference>
<dbReference type="SMART" id="SM00133">
    <property type="entry name" value="S_TK_X"/>
    <property type="match status" value="1"/>
</dbReference>
<dbReference type="SMART" id="SM00220">
    <property type="entry name" value="S_TKc"/>
    <property type="match status" value="1"/>
</dbReference>
<dbReference type="SUPFAM" id="SSF49562">
    <property type="entry name" value="C2 domain (Calcium/lipid-binding domain, CaLB)"/>
    <property type="match status" value="1"/>
</dbReference>
<dbReference type="SUPFAM" id="SSF57889">
    <property type="entry name" value="Cysteine-rich domain"/>
    <property type="match status" value="2"/>
</dbReference>
<dbReference type="SUPFAM" id="SSF56112">
    <property type="entry name" value="Protein kinase-like (PK-like)"/>
    <property type="match status" value="1"/>
</dbReference>
<dbReference type="PROSITE" id="PS51285">
    <property type="entry name" value="AGC_KINASE_CTER"/>
    <property type="match status" value="1"/>
</dbReference>
<dbReference type="PROSITE" id="PS50004">
    <property type="entry name" value="C2"/>
    <property type="match status" value="1"/>
</dbReference>
<dbReference type="PROSITE" id="PS00107">
    <property type="entry name" value="PROTEIN_KINASE_ATP"/>
    <property type="match status" value="1"/>
</dbReference>
<dbReference type="PROSITE" id="PS50011">
    <property type="entry name" value="PROTEIN_KINASE_DOM"/>
    <property type="match status" value="1"/>
</dbReference>
<dbReference type="PROSITE" id="PS00108">
    <property type="entry name" value="PROTEIN_KINASE_ST"/>
    <property type="match status" value="1"/>
</dbReference>
<dbReference type="PROSITE" id="PS00479">
    <property type="entry name" value="ZF_DAG_PE_1"/>
    <property type="match status" value="2"/>
</dbReference>
<dbReference type="PROSITE" id="PS50081">
    <property type="entry name" value="ZF_DAG_PE_2"/>
    <property type="match status" value="2"/>
</dbReference>
<proteinExistence type="evidence at protein level"/>
<organism>
    <name type="scientific">Rattus norvegicus</name>
    <name type="common">Rat</name>
    <dbReference type="NCBI Taxonomy" id="10116"/>
    <lineage>
        <taxon>Eukaryota</taxon>
        <taxon>Metazoa</taxon>
        <taxon>Chordata</taxon>
        <taxon>Craniata</taxon>
        <taxon>Vertebrata</taxon>
        <taxon>Euteleostomi</taxon>
        <taxon>Mammalia</taxon>
        <taxon>Eutheria</taxon>
        <taxon>Euarchontoglires</taxon>
        <taxon>Glires</taxon>
        <taxon>Rodentia</taxon>
        <taxon>Myomorpha</taxon>
        <taxon>Muroidea</taxon>
        <taxon>Muridae</taxon>
        <taxon>Murinae</taxon>
        <taxon>Rattus</taxon>
    </lineage>
</organism>
<evidence type="ECO:0000250" key="1"/>
<evidence type="ECO:0000250" key="2">
    <source>
        <dbReference type="UniProtKB" id="P16054"/>
    </source>
</evidence>
<evidence type="ECO:0000250" key="3">
    <source>
        <dbReference type="UniProtKB" id="Q02156"/>
    </source>
</evidence>
<evidence type="ECO:0000255" key="4">
    <source>
        <dbReference type="PROSITE-ProRule" id="PRU00041"/>
    </source>
</evidence>
<evidence type="ECO:0000255" key="5">
    <source>
        <dbReference type="PROSITE-ProRule" id="PRU00159"/>
    </source>
</evidence>
<evidence type="ECO:0000255" key="6">
    <source>
        <dbReference type="PROSITE-ProRule" id="PRU00226"/>
    </source>
</evidence>
<evidence type="ECO:0000255" key="7">
    <source>
        <dbReference type="PROSITE-ProRule" id="PRU00618"/>
    </source>
</evidence>
<evidence type="ECO:0000255" key="8">
    <source>
        <dbReference type="PROSITE-ProRule" id="PRU10027"/>
    </source>
</evidence>
<evidence type="ECO:0000256" key="9">
    <source>
        <dbReference type="SAM" id="MobiDB-lite"/>
    </source>
</evidence>
<evidence type="ECO:0000269" key="10">
    <source>
    </source>
</evidence>
<evidence type="ECO:0000269" key="11">
    <source>
    </source>
</evidence>
<evidence type="ECO:0000269" key="12">
    <source>
    </source>
</evidence>
<evidence type="ECO:0000269" key="13">
    <source>
    </source>
</evidence>
<evidence type="ECO:0000269" key="14">
    <source>
    </source>
</evidence>
<evidence type="ECO:0000305" key="15"/>
<evidence type="ECO:0007744" key="16">
    <source>
    </source>
</evidence>
<evidence type="ECO:0007829" key="17">
    <source>
        <dbReference type="PDB" id="1GMI"/>
    </source>
</evidence>
<comment type="function">
    <text evidence="3 10 11 13">Calcium-independent, phospholipid- and diacylglycerol (DAG)-dependent serine/threonine-protein kinase that plays essential roles in the regulation of multiple cellular processes linked to cytoskeletal proteins, such as cell adhesion, motility, migration and cell cycle, functions in neuron growth and ion channel regulation, and is involved in immune response, cancer cell invasion and regulation of apoptosis. Mediates cell adhesion to the extracellular matrix via integrin-dependent signaling, by mediating angiotensin-2-induced activation of integrin beta-1 (ITGB1) in cardiac fibroblasts. Phosphorylates MARCKS, which phosphorylates and activates PTK2/FAK, leading to the spread of cardiomyocytes. Involved in the control of the directional transport of ITGB1 in mesenchymal cells by phosphorylating vimentin (VIM), an intermediate filament (IF) protein. In epithelial cells, associates with and phosphorylates keratin-8 (KRT8), which induces targeting of desmoplakin at desmosomes and regulates cell-cell contact. Phosphorylates IQGAP1, which binds to CDC42, mediating epithelial cell-cell detachment prior to migration. During cytokinesis, forms a complex with YWHAB, which is crucial for daughter cell separation, and facilitates abscission by a mechanism which may implicate the regulation of RHOA. In cardiac myocytes, regulates myofilament function and excitation coupling at the Z-lines, where it is indirectly associated with F-actin via interaction with COPB1. During endothelin-induced cardiomyocyte hypertrophy, mediates activation of PTK2/FAK, which is critical for cardiomyocyte survival and regulation of sarcomere length. Plays a role in the pathogenesis of dilated cardiomyopathy via persistent phosphorylation of troponin I (TNNI3). Involved in nerve growth factor (NFG)-induced neurite outgrowth and neuron morphological change independently of its kinase activity, by inhibition of RHOA pathway, activation of CDC42 and cytoskeletal rearrangement. May be involved in presynaptic facilitation by mediating phorbol ester-induced synaptic potentiation. Phosphorylates gamma-aminobutyric acid receptor subunit gamma-2 (GABRG2), which reduces the response of GABA receptors to ethanol and benzodiazepines and may mediate acute tolerance to the intoxicating effects of ethanol. Upon PMA treatment, phosphorylates the capsaicin- and heat-activated cation channel TRPV1, which is required for bradykinin-induced sensitization of the heat response in nociceptive neurons. Is able to form a complex with PDLIM5 and N-type calcium channel, and may enhance channel activities and potentiates fast synaptic transmission by phosphorylating the pore-forming alpha subunit CACNA1B (CaV2.2). Downstream of TLR4, plays an important role in the lipopolysaccharide (LPS)-induced immune response by phosphorylating and activating TICAM2/TRAM, which in turn activates the transcription factor IRF3 and subsequent cytokines production. In differentiating erythroid progenitors, is regulated by EPO and controls the protection against the TNFSF10/TRAIL-mediated apoptosis, via BCL2. May be involved in the regulation of the insulin-induced phosphorylation and activation of AKT1. Phosphorylates NLRP5/MATER and may thereby modulate AKT pathway activation in cumulus cells (By similarity). Phosphorylates and activates LRRK1, which phosphorylates RAB proteins involved in intracellular trafficking (By similarity).</text>
</comment>
<comment type="catalytic activity">
    <reaction evidence="3">
        <text>L-seryl-[protein] + ATP = O-phospho-L-seryl-[protein] + ADP + H(+)</text>
        <dbReference type="Rhea" id="RHEA:17989"/>
        <dbReference type="Rhea" id="RHEA-COMP:9863"/>
        <dbReference type="Rhea" id="RHEA-COMP:11604"/>
        <dbReference type="ChEBI" id="CHEBI:15378"/>
        <dbReference type="ChEBI" id="CHEBI:29999"/>
        <dbReference type="ChEBI" id="CHEBI:30616"/>
        <dbReference type="ChEBI" id="CHEBI:83421"/>
        <dbReference type="ChEBI" id="CHEBI:456216"/>
        <dbReference type="EC" id="2.7.11.13"/>
    </reaction>
</comment>
<comment type="catalytic activity">
    <reaction evidence="3">
        <text>L-threonyl-[protein] + ATP = O-phospho-L-threonyl-[protein] + ADP + H(+)</text>
        <dbReference type="Rhea" id="RHEA:46608"/>
        <dbReference type="Rhea" id="RHEA-COMP:11060"/>
        <dbReference type="Rhea" id="RHEA-COMP:11605"/>
        <dbReference type="ChEBI" id="CHEBI:15378"/>
        <dbReference type="ChEBI" id="CHEBI:30013"/>
        <dbReference type="ChEBI" id="CHEBI:30616"/>
        <dbReference type="ChEBI" id="CHEBI:61977"/>
        <dbReference type="ChEBI" id="CHEBI:456216"/>
        <dbReference type="EC" id="2.7.11.13"/>
    </reaction>
</comment>
<comment type="activity regulation">
    <text>Novel PKCs (PRKCD, PRKCE, PRKCH and PRKCQ) are calcium-insensitive, but activated by diacylglycerol (DAG) and phosphatidylserine. Three specific sites; Thr-566 (activation loop of the kinase domain), Thr-710 (turn motif) and Ser-729 (hydrophobic region), need to be phosphorylated for its full activation.</text>
</comment>
<comment type="subunit">
    <text evidence="2 3 11 12 14">Forms a ternary complex with TRIM63 and RACK1/GN2BL1 (PubMed:15596539). Can form a complex with PDLIM5 and N-type calcium channel (PubMed:12665800). Interacts with COPB1 (PubMed:9360998). Interacts with DGKQ (By similarity). Interacts with STAT3 (By similarity). Interacts with YWHAB (By similarity). Interacts with HSP90AB1; promotes functional activation in a heat shock-dependent manner (By similarity). Interacts (via phorbol-ester/DAG-type 2 domain) with PRPH and VIM (By similarity). Interacts with NLRP5/MATER (By similarity).</text>
</comment>
<comment type="subcellular location">
    <subcellularLocation>
        <location evidence="3">Cytoplasm</location>
    </subcellularLocation>
    <subcellularLocation>
        <location evidence="3">Cytoplasm</location>
        <location evidence="3">Cytoskeleton</location>
    </subcellularLocation>
    <subcellularLocation>
        <location evidence="3">Cell membrane</location>
    </subcellularLocation>
    <subcellularLocation>
        <location evidence="14">Cytoplasm</location>
        <location evidence="14">Perinuclear region</location>
    </subcellularLocation>
    <subcellularLocation>
        <location evidence="2">Nucleus</location>
    </subcellularLocation>
    <text evidence="2 3">Translocated to plasma membrane in epithelial cells stimulated by HGF (By similarity). Associated with the Golgi at the perinuclear site in pre-passage fibroblasts (By similarity). In passaging cells, translocated to the cell periphery (By similarity). Translocated to the nucleus in PMA-treated cells (By similarity).</text>
</comment>
<comment type="domain">
    <text>The C1 domain, containing the phorbol ester/DAG-type region 1 (C1A) and 2 (C1B), is the diacylglycerol sensor and the C2 domain is a non-calcium binding domain.</text>
</comment>
<comment type="PTM">
    <text evidence="3">Phosphorylation on Thr-566 by PDPK1 triggers autophosphorylation on Ser-729. Phosphorylation in the hinge domain at Ser-350 by MAPK11 or MAPK14, Ser-346 by GSK3B and Ser-368 by autophosphorylation is required for interaction with YWHAB. In response to growth factors, phosphorylated at Thr-703 and Ser-729 by the mTORC2 complex, promoting autophosphorylation and activation of PRKCE (By similarity).</text>
</comment>
<comment type="similarity">
    <text evidence="15">Belongs to the protein kinase superfamily. AGC Ser/Thr protein kinase family. PKC subfamily.</text>
</comment>
<keyword id="KW-0002">3D-structure</keyword>
<keyword id="KW-0067">ATP-binding</keyword>
<keyword id="KW-0130">Cell adhesion</keyword>
<keyword id="KW-0131">Cell cycle</keyword>
<keyword id="KW-0132">Cell division</keyword>
<keyword id="KW-1003">Cell membrane</keyword>
<keyword id="KW-0963">Cytoplasm</keyword>
<keyword id="KW-0206">Cytoskeleton</keyword>
<keyword id="KW-0391">Immunity</keyword>
<keyword id="KW-0418">Kinase</keyword>
<keyword id="KW-0472">Membrane</keyword>
<keyword id="KW-0479">Metal-binding</keyword>
<keyword id="KW-0547">Nucleotide-binding</keyword>
<keyword id="KW-0539">Nucleus</keyword>
<keyword id="KW-0597">Phosphoprotein</keyword>
<keyword id="KW-1185">Reference proteome</keyword>
<keyword id="KW-0677">Repeat</keyword>
<keyword id="KW-0723">Serine/threonine-protein kinase</keyword>
<keyword id="KW-0808">Transferase</keyword>
<keyword id="KW-0862">Zinc</keyword>
<keyword id="KW-0863">Zinc-finger</keyword>
<sequence>MVVFNGLLKIKICEAVSLKPTAWSLRHAVGPRPQTFLLDPYIALNVDDSRIGQTATKQKTNSPAWHDEFVTDVCNGRKIELAVFHDAPIGYDDFVANCTIQFEELLQNGSRHFEDWIDLEPEGKVYVIIDLSGSSGEAPKDNEERVFRERMRPRKRQGAVRRRVHQVNGHKFMATYLRQPTYCSHCRDFIWGVIGKQGYQCQVCTCVVHKRCHELIITKCAGLKKQETPDEVGSQRFSVNMPHKFGIHNYKVPTFCDHCGSLLWGLLRQGLQCKVCKMNVHRRCETNVAPNCGVDARGIAKVLADLGVTPDKITNSGQRRKKLAAGAESPQPASGNSPSEDDRSKSAPTSPCDQELKELENNIRKALSFDNRGEEHRASSSTDGQLASPGENGEVRQGQAKRLGLDEFNFIKVLGKGSFGKVMLAELKGKDEVYAVKVLKKDVILQDDDVDCTMTEKRILALARKHPYLTQLYCCFQTKDRLFFVMEYVNGGDLMFQIQRSRKFDEPRSGFYAAEVTSALMFLHQHGVIYRDLKLDNILLDAEGHSKLADFGMCKEGILNGVTTTTFCGTPDYIAPEILQELEYGPSVDWWALGVLMYEMMAGQPPFEADNEDDLFESILHDDVLYPVWLSKEAVSILKAFMTKNPHKRLGCVAAQNGEDAIKQHPFFKEIDWVLLEQKKMKPPFKPRIKTKRDVNNFDQDFTREEPILTLVDEAIVKQINQEEFKGFSYFGEDLMP</sequence>
<gene>
    <name type="primary">Prkce</name>
    <name type="synonym">Pkce</name>
</gene>
<name>KPCE_RAT</name>